<organism>
    <name type="scientific">Aeromonas hydrophila subsp. hydrophila (strain ATCC 7966 / DSM 30187 / BCRC 13018 / CCUG 14551 / JCM 1027 / KCTC 2358 / NCIMB 9240 / NCTC 8049)</name>
    <dbReference type="NCBI Taxonomy" id="380703"/>
    <lineage>
        <taxon>Bacteria</taxon>
        <taxon>Pseudomonadati</taxon>
        <taxon>Pseudomonadota</taxon>
        <taxon>Gammaproteobacteria</taxon>
        <taxon>Aeromonadales</taxon>
        <taxon>Aeromonadaceae</taxon>
        <taxon>Aeromonas</taxon>
    </lineage>
</organism>
<sequence>MARTTPIERYRNIGISAHIDAGKTTTTERVLFYTGVSHKIGEVHDGAATMDWMEQEQERGITITSAATTAFWSGMGKQFQPHRINIIDTPGHVDFTIEVERSMRVLDGAVMVYCAVGGVQPQSETVWRQANKYKVPRIAFVNKMDRTGANFLRCVEHIKTRLKGNPVPLQLNIGSEENFKGVIDLVKMKAINWSEADQGVSFDYEDVPAELLEKAQEMRMTLVEAAAEASEDLMEKYLGGEELTEEEIKKALRQRVLNNEIILVTCGSAFKNKGVQAMLDAVVDYLPAPTDVAAIDGLKLDGETKDERHASDDEPFAALAFKIATDPFVGNLTFFRVYSGVVNSGDSVLNSVKEKRERFGRIVQMHANKREEIKEVRAGDIAAAIGLKDVTTGDTLCDEKAPIILERMEFPEPVISIAVEPKTKADQEKMGLALGRLAQEDPSFRVWTDEESGQTIIAGMGELHLDIIVDRMRREFKVEANVGKPQVAYRETIRNTVKDIEGKHAKQSGGRGQYGHVVIDMYPLEEGKAYEFVNDIKGGVIPGEFIPGVDKGIREQLKSGPLAGYPVMDLGVRLHFGSYHDVDSSELAFKIAASMAFKAGFMKANPVLLEPIMKVEVETPEDYMGDVIGDLNRRRGLIEGMEDGPSGKIVRALVPLAEMFGYATALRSATQGRASYAMEFAKYHDAPTNVAQAVIEERKSK</sequence>
<reference key="1">
    <citation type="journal article" date="2006" name="J. Bacteriol.">
        <title>Genome sequence of Aeromonas hydrophila ATCC 7966T: jack of all trades.</title>
        <authorList>
            <person name="Seshadri R."/>
            <person name="Joseph S.W."/>
            <person name="Chopra A.K."/>
            <person name="Sha J."/>
            <person name="Shaw J."/>
            <person name="Graf J."/>
            <person name="Haft D.H."/>
            <person name="Wu M."/>
            <person name="Ren Q."/>
            <person name="Rosovitz M.J."/>
            <person name="Madupu R."/>
            <person name="Tallon L."/>
            <person name="Kim M."/>
            <person name="Jin S."/>
            <person name="Vuong H."/>
            <person name="Stine O.C."/>
            <person name="Ali A."/>
            <person name="Horneman A.J."/>
            <person name="Heidelberg J.F."/>
        </authorList>
    </citation>
    <scope>NUCLEOTIDE SEQUENCE [LARGE SCALE GENOMIC DNA]</scope>
    <source>
        <strain>ATCC 7966 / DSM 30187 / BCRC 13018 / CCUG 14551 / JCM 1027 / KCTC 2358 / NCIMB 9240 / NCTC 8049</strain>
    </source>
</reference>
<protein>
    <recommendedName>
        <fullName evidence="1">Elongation factor G</fullName>
        <shortName evidence="1">EF-G</shortName>
    </recommendedName>
</protein>
<keyword id="KW-0963">Cytoplasm</keyword>
<keyword id="KW-0251">Elongation factor</keyword>
<keyword id="KW-0342">GTP-binding</keyword>
<keyword id="KW-0547">Nucleotide-binding</keyword>
<keyword id="KW-0648">Protein biosynthesis</keyword>
<keyword id="KW-1185">Reference proteome</keyword>
<proteinExistence type="inferred from homology"/>
<feature type="chain" id="PRO_1000008800" description="Elongation factor G">
    <location>
        <begin position="1"/>
        <end position="701"/>
    </location>
</feature>
<feature type="domain" description="tr-type G">
    <location>
        <begin position="8"/>
        <end position="290"/>
    </location>
</feature>
<feature type="binding site" evidence="1">
    <location>
        <begin position="17"/>
        <end position="24"/>
    </location>
    <ligand>
        <name>GTP</name>
        <dbReference type="ChEBI" id="CHEBI:37565"/>
    </ligand>
</feature>
<feature type="binding site" evidence="1">
    <location>
        <begin position="88"/>
        <end position="92"/>
    </location>
    <ligand>
        <name>GTP</name>
        <dbReference type="ChEBI" id="CHEBI:37565"/>
    </ligand>
</feature>
<feature type="binding site" evidence="1">
    <location>
        <begin position="142"/>
        <end position="145"/>
    </location>
    <ligand>
        <name>GTP</name>
        <dbReference type="ChEBI" id="CHEBI:37565"/>
    </ligand>
</feature>
<dbReference type="EMBL" id="CP000462">
    <property type="protein sequence ID" value="ABK39709.1"/>
    <property type="molecule type" value="Genomic_DNA"/>
</dbReference>
<dbReference type="RefSeq" id="WP_011707695.1">
    <property type="nucleotide sequence ID" value="NC_008570.1"/>
</dbReference>
<dbReference type="RefSeq" id="YP_858447.1">
    <property type="nucleotide sequence ID" value="NC_008570.1"/>
</dbReference>
<dbReference type="SMR" id="A0KQ96"/>
<dbReference type="STRING" id="380703.AHA_4019"/>
<dbReference type="EnsemblBacteria" id="ABK39709">
    <property type="protein sequence ID" value="ABK39709"/>
    <property type="gene ID" value="AHA_4019"/>
</dbReference>
<dbReference type="GeneID" id="4487340"/>
<dbReference type="KEGG" id="aha:AHA_4019"/>
<dbReference type="PATRIC" id="fig|380703.7.peg.3979"/>
<dbReference type="eggNOG" id="COG0480">
    <property type="taxonomic scope" value="Bacteria"/>
</dbReference>
<dbReference type="HOGENOM" id="CLU_002794_4_1_6"/>
<dbReference type="OrthoDB" id="9804431at2"/>
<dbReference type="Proteomes" id="UP000000756">
    <property type="component" value="Chromosome"/>
</dbReference>
<dbReference type="GO" id="GO:0005737">
    <property type="term" value="C:cytoplasm"/>
    <property type="evidence" value="ECO:0007669"/>
    <property type="project" value="UniProtKB-SubCell"/>
</dbReference>
<dbReference type="GO" id="GO:0005525">
    <property type="term" value="F:GTP binding"/>
    <property type="evidence" value="ECO:0007669"/>
    <property type="project" value="UniProtKB-UniRule"/>
</dbReference>
<dbReference type="GO" id="GO:0003924">
    <property type="term" value="F:GTPase activity"/>
    <property type="evidence" value="ECO:0007669"/>
    <property type="project" value="InterPro"/>
</dbReference>
<dbReference type="GO" id="GO:0097216">
    <property type="term" value="F:guanosine tetraphosphate binding"/>
    <property type="evidence" value="ECO:0007669"/>
    <property type="project" value="UniProtKB-ARBA"/>
</dbReference>
<dbReference type="GO" id="GO:0003746">
    <property type="term" value="F:translation elongation factor activity"/>
    <property type="evidence" value="ECO:0007669"/>
    <property type="project" value="UniProtKB-UniRule"/>
</dbReference>
<dbReference type="GO" id="GO:0032790">
    <property type="term" value="P:ribosome disassembly"/>
    <property type="evidence" value="ECO:0007669"/>
    <property type="project" value="TreeGrafter"/>
</dbReference>
<dbReference type="CDD" id="cd01886">
    <property type="entry name" value="EF-G"/>
    <property type="match status" value="1"/>
</dbReference>
<dbReference type="CDD" id="cd16262">
    <property type="entry name" value="EFG_III"/>
    <property type="match status" value="1"/>
</dbReference>
<dbReference type="CDD" id="cd01434">
    <property type="entry name" value="EFG_mtEFG1_IV"/>
    <property type="match status" value="1"/>
</dbReference>
<dbReference type="CDD" id="cd03713">
    <property type="entry name" value="EFG_mtEFG_C"/>
    <property type="match status" value="1"/>
</dbReference>
<dbReference type="CDD" id="cd04088">
    <property type="entry name" value="EFG_mtEFG_II"/>
    <property type="match status" value="1"/>
</dbReference>
<dbReference type="FunFam" id="2.40.30.10:FF:000006">
    <property type="entry name" value="Elongation factor G"/>
    <property type="match status" value="1"/>
</dbReference>
<dbReference type="FunFam" id="3.30.230.10:FF:000003">
    <property type="entry name" value="Elongation factor G"/>
    <property type="match status" value="1"/>
</dbReference>
<dbReference type="FunFam" id="3.30.70.240:FF:000001">
    <property type="entry name" value="Elongation factor G"/>
    <property type="match status" value="1"/>
</dbReference>
<dbReference type="FunFam" id="3.30.70.870:FF:000001">
    <property type="entry name" value="Elongation factor G"/>
    <property type="match status" value="1"/>
</dbReference>
<dbReference type="FunFam" id="3.40.50.300:FF:000029">
    <property type="entry name" value="Elongation factor G"/>
    <property type="match status" value="1"/>
</dbReference>
<dbReference type="Gene3D" id="3.30.230.10">
    <property type="match status" value="1"/>
</dbReference>
<dbReference type="Gene3D" id="3.30.70.240">
    <property type="match status" value="1"/>
</dbReference>
<dbReference type="Gene3D" id="3.30.70.870">
    <property type="entry name" value="Elongation Factor G (Translational Gtpase), domain 3"/>
    <property type="match status" value="1"/>
</dbReference>
<dbReference type="Gene3D" id="3.40.50.300">
    <property type="entry name" value="P-loop containing nucleotide triphosphate hydrolases"/>
    <property type="match status" value="1"/>
</dbReference>
<dbReference type="Gene3D" id="2.40.30.10">
    <property type="entry name" value="Translation factors"/>
    <property type="match status" value="1"/>
</dbReference>
<dbReference type="HAMAP" id="MF_00054_B">
    <property type="entry name" value="EF_G_EF_2_B"/>
    <property type="match status" value="1"/>
</dbReference>
<dbReference type="InterPro" id="IPR041095">
    <property type="entry name" value="EFG_II"/>
</dbReference>
<dbReference type="InterPro" id="IPR009022">
    <property type="entry name" value="EFG_III"/>
</dbReference>
<dbReference type="InterPro" id="IPR035647">
    <property type="entry name" value="EFG_III/V"/>
</dbReference>
<dbReference type="InterPro" id="IPR047872">
    <property type="entry name" value="EFG_IV"/>
</dbReference>
<dbReference type="InterPro" id="IPR035649">
    <property type="entry name" value="EFG_V"/>
</dbReference>
<dbReference type="InterPro" id="IPR000640">
    <property type="entry name" value="EFG_V-like"/>
</dbReference>
<dbReference type="InterPro" id="IPR004161">
    <property type="entry name" value="EFTu-like_2"/>
</dbReference>
<dbReference type="InterPro" id="IPR031157">
    <property type="entry name" value="G_TR_CS"/>
</dbReference>
<dbReference type="InterPro" id="IPR027417">
    <property type="entry name" value="P-loop_NTPase"/>
</dbReference>
<dbReference type="InterPro" id="IPR020568">
    <property type="entry name" value="Ribosomal_Su5_D2-typ_SF"/>
</dbReference>
<dbReference type="InterPro" id="IPR014721">
    <property type="entry name" value="Ribsml_uS5_D2-typ_fold_subgr"/>
</dbReference>
<dbReference type="InterPro" id="IPR005225">
    <property type="entry name" value="Small_GTP-bd"/>
</dbReference>
<dbReference type="InterPro" id="IPR000795">
    <property type="entry name" value="T_Tr_GTP-bd_dom"/>
</dbReference>
<dbReference type="InterPro" id="IPR009000">
    <property type="entry name" value="Transl_B-barrel_sf"/>
</dbReference>
<dbReference type="InterPro" id="IPR004540">
    <property type="entry name" value="Transl_elong_EFG/EF2"/>
</dbReference>
<dbReference type="InterPro" id="IPR005517">
    <property type="entry name" value="Transl_elong_EFG/EF2_IV"/>
</dbReference>
<dbReference type="NCBIfam" id="TIGR00484">
    <property type="entry name" value="EF-G"/>
    <property type="match status" value="1"/>
</dbReference>
<dbReference type="NCBIfam" id="NF009381">
    <property type="entry name" value="PRK12740.1-5"/>
    <property type="match status" value="1"/>
</dbReference>
<dbReference type="NCBIfam" id="TIGR00231">
    <property type="entry name" value="small_GTP"/>
    <property type="match status" value="1"/>
</dbReference>
<dbReference type="PANTHER" id="PTHR43261:SF1">
    <property type="entry name" value="RIBOSOME-RELEASING FACTOR 2, MITOCHONDRIAL"/>
    <property type="match status" value="1"/>
</dbReference>
<dbReference type="PANTHER" id="PTHR43261">
    <property type="entry name" value="TRANSLATION ELONGATION FACTOR G-RELATED"/>
    <property type="match status" value="1"/>
</dbReference>
<dbReference type="Pfam" id="PF00679">
    <property type="entry name" value="EFG_C"/>
    <property type="match status" value="1"/>
</dbReference>
<dbReference type="Pfam" id="PF14492">
    <property type="entry name" value="EFG_III"/>
    <property type="match status" value="1"/>
</dbReference>
<dbReference type="Pfam" id="PF03764">
    <property type="entry name" value="EFG_IV"/>
    <property type="match status" value="1"/>
</dbReference>
<dbReference type="Pfam" id="PF00009">
    <property type="entry name" value="GTP_EFTU"/>
    <property type="match status" value="1"/>
</dbReference>
<dbReference type="Pfam" id="PF03144">
    <property type="entry name" value="GTP_EFTU_D2"/>
    <property type="match status" value="1"/>
</dbReference>
<dbReference type="PRINTS" id="PR00315">
    <property type="entry name" value="ELONGATNFCT"/>
</dbReference>
<dbReference type="SMART" id="SM00838">
    <property type="entry name" value="EFG_C"/>
    <property type="match status" value="1"/>
</dbReference>
<dbReference type="SMART" id="SM00889">
    <property type="entry name" value="EFG_IV"/>
    <property type="match status" value="1"/>
</dbReference>
<dbReference type="SUPFAM" id="SSF54980">
    <property type="entry name" value="EF-G C-terminal domain-like"/>
    <property type="match status" value="2"/>
</dbReference>
<dbReference type="SUPFAM" id="SSF52540">
    <property type="entry name" value="P-loop containing nucleoside triphosphate hydrolases"/>
    <property type="match status" value="1"/>
</dbReference>
<dbReference type="SUPFAM" id="SSF54211">
    <property type="entry name" value="Ribosomal protein S5 domain 2-like"/>
    <property type="match status" value="1"/>
</dbReference>
<dbReference type="SUPFAM" id="SSF50447">
    <property type="entry name" value="Translation proteins"/>
    <property type="match status" value="1"/>
</dbReference>
<dbReference type="PROSITE" id="PS00301">
    <property type="entry name" value="G_TR_1"/>
    <property type="match status" value="1"/>
</dbReference>
<dbReference type="PROSITE" id="PS51722">
    <property type="entry name" value="G_TR_2"/>
    <property type="match status" value="1"/>
</dbReference>
<evidence type="ECO:0000255" key="1">
    <source>
        <dbReference type="HAMAP-Rule" id="MF_00054"/>
    </source>
</evidence>
<comment type="function">
    <text evidence="1">Catalyzes the GTP-dependent ribosomal translocation step during translation elongation. During this step, the ribosome changes from the pre-translocational (PRE) to the post-translocational (POST) state as the newly formed A-site-bound peptidyl-tRNA and P-site-bound deacylated tRNA move to the P and E sites, respectively. Catalyzes the coordinated movement of the two tRNA molecules, the mRNA and conformational changes in the ribosome.</text>
</comment>
<comment type="subcellular location">
    <subcellularLocation>
        <location evidence="1">Cytoplasm</location>
    </subcellularLocation>
</comment>
<comment type="similarity">
    <text evidence="1">Belongs to the TRAFAC class translation factor GTPase superfamily. Classic translation factor GTPase family. EF-G/EF-2 subfamily.</text>
</comment>
<gene>
    <name evidence="1" type="primary">fusA</name>
    <name type="ordered locus">AHA_4019</name>
</gene>
<name>EFG_AERHH</name>
<accession>A0KQ96</accession>